<reference key="1">
    <citation type="submission" date="2008-10" db="EMBL/GenBank/DDBJ databases">
        <title>Genome sequence of Clostridium botulinum A2 Kyoto.</title>
        <authorList>
            <person name="Shrivastava S."/>
            <person name="Brinkac L.M."/>
            <person name="Brown J.L."/>
            <person name="Bruce D."/>
            <person name="Detter C.C."/>
            <person name="Johnson E.A."/>
            <person name="Munk C.A."/>
            <person name="Smith L.A."/>
            <person name="Smith T.J."/>
            <person name="Sutton G."/>
            <person name="Brettin T.S."/>
        </authorList>
    </citation>
    <scope>NUCLEOTIDE SEQUENCE [LARGE SCALE GENOMIC DNA]</scope>
    <source>
        <strain>Kyoto / Type A2</strain>
    </source>
</reference>
<comment type="function">
    <text evidence="1">Catalyzes the ATP-dependent conversion of 7-carboxy-7-deazaguanine (CDG) to 7-cyano-7-deazaguanine (preQ(0)).</text>
</comment>
<comment type="catalytic activity">
    <reaction evidence="1">
        <text>7-carboxy-7-deazaguanine + NH4(+) + ATP = 7-cyano-7-deazaguanine + ADP + phosphate + H2O + H(+)</text>
        <dbReference type="Rhea" id="RHEA:27982"/>
        <dbReference type="ChEBI" id="CHEBI:15377"/>
        <dbReference type="ChEBI" id="CHEBI:15378"/>
        <dbReference type="ChEBI" id="CHEBI:28938"/>
        <dbReference type="ChEBI" id="CHEBI:30616"/>
        <dbReference type="ChEBI" id="CHEBI:43474"/>
        <dbReference type="ChEBI" id="CHEBI:45075"/>
        <dbReference type="ChEBI" id="CHEBI:61036"/>
        <dbReference type="ChEBI" id="CHEBI:456216"/>
        <dbReference type="EC" id="6.3.4.20"/>
    </reaction>
</comment>
<comment type="cofactor">
    <cofactor evidence="1">
        <name>Zn(2+)</name>
        <dbReference type="ChEBI" id="CHEBI:29105"/>
    </cofactor>
    <text evidence="1">Binds 1 zinc ion per subunit.</text>
</comment>
<comment type="pathway">
    <text evidence="1">Purine metabolism; 7-cyano-7-deazaguanine biosynthesis.</text>
</comment>
<comment type="subunit">
    <text evidence="1">Homodimer.</text>
</comment>
<comment type="similarity">
    <text evidence="1">Belongs to the QueC family.</text>
</comment>
<evidence type="ECO:0000255" key="1">
    <source>
        <dbReference type="HAMAP-Rule" id="MF_01633"/>
    </source>
</evidence>
<name>QUEC_CLOBJ</name>
<keyword id="KW-0067">ATP-binding</keyword>
<keyword id="KW-0436">Ligase</keyword>
<keyword id="KW-0479">Metal-binding</keyword>
<keyword id="KW-0547">Nucleotide-binding</keyword>
<keyword id="KW-0671">Queuosine biosynthesis</keyword>
<keyword id="KW-0862">Zinc</keyword>
<organism>
    <name type="scientific">Clostridium botulinum (strain Kyoto / Type A2)</name>
    <dbReference type="NCBI Taxonomy" id="536232"/>
    <lineage>
        <taxon>Bacteria</taxon>
        <taxon>Bacillati</taxon>
        <taxon>Bacillota</taxon>
        <taxon>Clostridia</taxon>
        <taxon>Eubacteriales</taxon>
        <taxon>Clostridiaceae</taxon>
        <taxon>Clostridium</taxon>
    </lineage>
</organism>
<protein>
    <recommendedName>
        <fullName evidence="1">7-cyano-7-deazaguanine synthase</fullName>
        <ecNumber evidence="1">6.3.4.20</ecNumber>
    </recommendedName>
    <alternativeName>
        <fullName evidence="1">7-cyano-7-carbaguanine synthase</fullName>
    </alternativeName>
    <alternativeName>
        <fullName evidence="1">PreQ(0) synthase</fullName>
    </alternativeName>
    <alternativeName>
        <fullName evidence="1">Queuosine biosynthesis protein QueC</fullName>
    </alternativeName>
</protein>
<accession>C1FN27</accession>
<sequence>MNKEKAIVVFSGGQDSTTCLFWAKKKYKEVIAVSFDYNQKHKLELDCAKDICKKYNIEHHILDLNLLNQLAPNSLTRQDITVDKSAPKEGVPNSFVDGRNLLFLSFVAVFAKQKGINTIITGVSQSDFSGYPDCRDVFIKSLNVTLNLAMDYEFEIITPLMWINKAETWKMAYDLGVLDIVKEETLTCYNGIKADGCGECPACKLRKKGYWEFEKYLMN</sequence>
<gene>
    <name evidence="1" type="primary">queC</name>
    <name type="ordered locus">CLM_1798</name>
</gene>
<proteinExistence type="inferred from homology"/>
<feature type="chain" id="PRO_1000186576" description="7-cyano-7-deazaguanine synthase">
    <location>
        <begin position="1"/>
        <end position="219"/>
    </location>
</feature>
<feature type="binding site" evidence="1">
    <location>
        <begin position="10"/>
        <end position="20"/>
    </location>
    <ligand>
        <name>ATP</name>
        <dbReference type="ChEBI" id="CHEBI:30616"/>
    </ligand>
</feature>
<feature type="binding site" evidence="1">
    <location>
        <position position="188"/>
    </location>
    <ligand>
        <name>Zn(2+)</name>
        <dbReference type="ChEBI" id="CHEBI:29105"/>
    </ligand>
</feature>
<feature type="binding site" evidence="1">
    <location>
        <position position="197"/>
    </location>
    <ligand>
        <name>Zn(2+)</name>
        <dbReference type="ChEBI" id="CHEBI:29105"/>
    </ligand>
</feature>
<feature type="binding site" evidence="1">
    <location>
        <position position="200"/>
    </location>
    <ligand>
        <name>Zn(2+)</name>
        <dbReference type="ChEBI" id="CHEBI:29105"/>
    </ligand>
</feature>
<feature type="binding site" evidence="1">
    <location>
        <position position="203"/>
    </location>
    <ligand>
        <name>Zn(2+)</name>
        <dbReference type="ChEBI" id="CHEBI:29105"/>
    </ligand>
</feature>
<dbReference type="EC" id="6.3.4.20" evidence="1"/>
<dbReference type="EMBL" id="CP001581">
    <property type="protein sequence ID" value="ACO85843.1"/>
    <property type="molecule type" value="Genomic_DNA"/>
</dbReference>
<dbReference type="RefSeq" id="WP_012704981.1">
    <property type="nucleotide sequence ID" value="NC_012563.1"/>
</dbReference>
<dbReference type="SMR" id="C1FN27"/>
<dbReference type="KEGG" id="cby:CLM_1798"/>
<dbReference type="eggNOG" id="COG0603">
    <property type="taxonomic scope" value="Bacteria"/>
</dbReference>
<dbReference type="HOGENOM" id="CLU_081854_0_0_9"/>
<dbReference type="UniPathway" id="UPA00391"/>
<dbReference type="Proteomes" id="UP000001374">
    <property type="component" value="Chromosome"/>
</dbReference>
<dbReference type="GO" id="GO:0005524">
    <property type="term" value="F:ATP binding"/>
    <property type="evidence" value="ECO:0007669"/>
    <property type="project" value="UniProtKB-UniRule"/>
</dbReference>
<dbReference type="GO" id="GO:0016879">
    <property type="term" value="F:ligase activity, forming carbon-nitrogen bonds"/>
    <property type="evidence" value="ECO:0007669"/>
    <property type="project" value="UniProtKB-UniRule"/>
</dbReference>
<dbReference type="GO" id="GO:0008270">
    <property type="term" value="F:zinc ion binding"/>
    <property type="evidence" value="ECO:0007669"/>
    <property type="project" value="UniProtKB-UniRule"/>
</dbReference>
<dbReference type="GO" id="GO:0008616">
    <property type="term" value="P:queuosine biosynthetic process"/>
    <property type="evidence" value="ECO:0007669"/>
    <property type="project" value="UniProtKB-UniRule"/>
</dbReference>
<dbReference type="CDD" id="cd01995">
    <property type="entry name" value="QueC-like"/>
    <property type="match status" value="1"/>
</dbReference>
<dbReference type="FunFam" id="3.40.50.620:FF:000017">
    <property type="entry name" value="7-cyano-7-deazaguanine synthase"/>
    <property type="match status" value="1"/>
</dbReference>
<dbReference type="Gene3D" id="3.40.50.620">
    <property type="entry name" value="HUPs"/>
    <property type="match status" value="1"/>
</dbReference>
<dbReference type="HAMAP" id="MF_01633">
    <property type="entry name" value="QueC"/>
    <property type="match status" value="1"/>
</dbReference>
<dbReference type="InterPro" id="IPR018317">
    <property type="entry name" value="QueC"/>
</dbReference>
<dbReference type="InterPro" id="IPR014729">
    <property type="entry name" value="Rossmann-like_a/b/a_fold"/>
</dbReference>
<dbReference type="NCBIfam" id="TIGR00364">
    <property type="entry name" value="7-cyano-7-deazaguanine synthase QueC"/>
    <property type="match status" value="1"/>
</dbReference>
<dbReference type="PANTHER" id="PTHR42914">
    <property type="entry name" value="7-CYANO-7-DEAZAGUANINE SYNTHASE"/>
    <property type="match status" value="1"/>
</dbReference>
<dbReference type="PANTHER" id="PTHR42914:SF1">
    <property type="entry name" value="7-CYANO-7-DEAZAGUANINE SYNTHASE"/>
    <property type="match status" value="1"/>
</dbReference>
<dbReference type="Pfam" id="PF06508">
    <property type="entry name" value="QueC"/>
    <property type="match status" value="1"/>
</dbReference>
<dbReference type="PIRSF" id="PIRSF006293">
    <property type="entry name" value="ExsB"/>
    <property type="match status" value="1"/>
</dbReference>
<dbReference type="SUPFAM" id="SSF52402">
    <property type="entry name" value="Adenine nucleotide alpha hydrolases-like"/>
    <property type="match status" value="1"/>
</dbReference>